<accession>B1X9X4</accession>
<protein>
    <recommendedName>
        <fullName evidence="1">Low affinity potassium transport system protein Kup</fullName>
    </recommendedName>
    <alternativeName>
        <fullName evidence="1">Kup system potassium uptake protein</fullName>
    </alternativeName>
</protein>
<keyword id="KW-0997">Cell inner membrane</keyword>
<keyword id="KW-1003">Cell membrane</keyword>
<keyword id="KW-0406">Ion transport</keyword>
<keyword id="KW-0472">Membrane</keyword>
<keyword id="KW-0630">Potassium</keyword>
<keyword id="KW-0633">Potassium transport</keyword>
<keyword id="KW-0769">Symport</keyword>
<keyword id="KW-0812">Transmembrane</keyword>
<keyword id="KW-1133">Transmembrane helix</keyword>
<keyword id="KW-0813">Transport</keyword>
<reference key="1">
    <citation type="journal article" date="2008" name="J. Bacteriol.">
        <title>The complete genome sequence of Escherichia coli DH10B: insights into the biology of a laboratory workhorse.</title>
        <authorList>
            <person name="Durfee T."/>
            <person name="Nelson R."/>
            <person name="Baldwin S."/>
            <person name="Plunkett G. III"/>
            <person name="Burland V."/>
            <person name="Mau B."/>
            <person name="Petrosino J.F."/>
            <person name="Qin X."/>
            <person name="Muzny D.M."/>
            <person name="Ayele M."/>
            <person name="Gibbs R.A."/>
            <person name="Csorgo B."/>
            <person name="Posfai G."/>
            <person name="Weinstock G.M."/>
            <person name="Blattner F.R."/>
        </authorList>
    </citation>
    <scope>NUCLEOTIDE SEQUENCE [LARGE SCALE GENOMIC DNA]</scope>
    <source>
        <strain>K12 / DH10B</strain>
    </source>
</reference>
<feature type="chain" id="PRO_1000190262" description="Low affinity potassium transport system protein Kup">
    <location>
        <begin position="1"/>
        <end position="622"/>
    </location>
</feature>
<feature type="transmembrane region" description="Helical" evidence="1">
    <location>
        <begin position="9"/>
        <end position="29"/>
    </location>
</feature>
<feature type="transmembrane region" description="Helical" evidence="1">
    <location>
        <begin position="49"/>
        <end position="69"/>
    </location>
</feature>
<feature type="transmembrane region" description="Helical" evidence="1">
    <location>
        <begin position="103"/>
        <end position="123"/>
    </location>
</feature>
<feature type="transmembrane region" description="Helical" evidence="1">
    <location>
        <begin position="137"/>
        <end position="157"/>
    </location>
</feature>
<feature type="transmembrane region" description="Helical" evidence="1">
    <location>
        <begin position="165"/>
        <end position="185"/>
    </location>
</feature>
<feature type="transmembrane region" description="Helical" evidence="1">
    <location>
        <begin position="213"/>
        <end position="233"/>
    </location>
</feature>
<feature type="transmembrane region" description="Helical" evidence="1">
    <location>
        <begin position="247"/>
        <end position="267"/>
    </location>
</feature>
<feature type="transmembrane region" description="Helical" evidence="1">
    <location>
        <begin position="276"/>
        <end position="296"/>
    </location>
</feature>
<feature type="transmembrane region" description="Helical" evidence="1">
    <location>
        <begin position="337"/>
        <end position="357"/>
    </location>
</feature>
<feature type="transmembrane region" description="Helical" evidence="1">
    <location>
        <begin position="363"/>
        <end position="383"/>
    </location>
</feature>
<feature type="transmembrane region" description="Helical" evidence="1">
    <location>
        <begin position="396"/>
        <end position="416"/>
    </location>
</feature>
<feature type="transmembrane region" description="Helical" evidence="1">
    <location>
        <begin position="419"/>
        <end position="439"/>
    </location>
</feature>
<organism>
    <name type="scientific">Escherichia coli (strain K12 / DH10B)</name>
    <dbReference type="NCBI Taxonomy" id="316385"/>
    <lineage>
        <taxon>Bacteria</taxon>
        <taxon>Pseudomonadati</taxon>
        <taxon>Pseudomonadota</taxon>
        <taxon>Gammaproteobacteria</taxon>
        <taxon>Enterobacterales</taxon>
        <taxon>Enterobacteriaceae</taxon>
        <taxon>Escherichia</taxon>
    </lineage>
</organism>
<evidence type="ECO:0000255" key="1">
    <source>
        <dbReference type="HAMAP-Rule" id="MF_01522"/>
    </source>
</evidence>
<comment type="function">
    <text evidence="1">Responsible for the low-affinity transport of potassium into the cell. Likely operates as a K(+):H(+) symporter.</text>
</comment>
<comment type="catalytic activity">
    <reaction evidence="1">
        <text>K(+)(in) + H(+)(in) = K(+)(out) + H(+)(out)</text>
        <dbReference type="Rhea" id="RHEA:28490"/>
        <dbReference type="ChEBI" id="CHEBI:15378"/>
        <dbReference type="ChEBI" id="CHEBI:29103"/>
    </reaction>
    <physiologicalReaction direction="right-to-left" evidence="1">
        <dbReference type="Rhea" id="RHEA:28492"/>
    </physiologicalReaction>
</comment>
<comment type="subcellular location">
    <subcellularLocation>
        <location evidence="1">Cell inner membrane</location>
        <topology evidence="1">Multi-pass membrane protein</topology>
    </subcellularLocation>
</comment>
<comment type="similarity">
    <text evidence="1">Belongs to the HAK/KUP transporter (TC 2.A.72) family.</text>
</comment>
<name>KUP_ECODH</name>
<sequence length="622" mass="69294">MSTDNKQSLPAITLAAIGVVYGDIGTSPLYTLRECLSGQFGFGVERDAVFGFLSLIFWLLIFVVSIKYLTFVMRADNAGEGGILTLMSLAGRNTSARTTSMLVIMGLIGGSFFYGEVVITPAISVMSAIEGLEIVAPQLDTWIVPLSIIVLTLLFMIQKHGTAMVGKLFAPIMLTWFLILAGLGLRSIIANPEVLHALNPMWAVHFFLEYKTVSFIALGAVVLSITGVEALYADMGHFGKFPIRLAWFTVVLPSLTLNYFGQGALLLKNPEAIKNPFFLLAPDWALIPLLIIAALATVIASQAVISGVFSLTRQAVRLGYLSPMRIIHTSEMESGQIYIPFVNWMLYVAVVIVIVSFEHSSNLAAAYGIAVTGTMVLTSILSTTVARQNWHWNKYFVALILIAFLCVDIPLFTANLDKLLSGGWLPLSLGTVMFIVMTTWKSERFRLLRRMHEHGNSLEAMIASLEKSPPVRVPGTAVYMSRAINVIPFALMHNLKHNKVLHERVILLTLRTEDAPYVHNVRRVQIEQLSPTFWRVVASYGWRETPNVEEVFHRCGLEGLSCRMMETSFFMSHESLILGKRPWYLRLRGKLYLLLQRNALRAPDQFEIPPNRVIELGTQVEI</sequence>
<gene>
    <name evidence="1" type="primary">kup</name>
    <name type="ordered locus">ECDH10B_3935</name>
</gene>
<proteinExistence type="inferred from homology"/>
<dbReference type="EMBL" id="CP000948">
    <property type="protein sequence ID" value="ACB04789.1"/>
    <property type="molecule type" value="Genomic_DNA"/>
</dbReference>
<dbReference type="RefSeq" id="WP_000102319.1">
    <property type="nucleotide sequence ID" value="NC_010473.1"/>
</dbReference>
<dbReference type="GeneID" id="75205465"/>
<dbReference type="KEGG" id="ecd:ECDH10B_3935"/>
<dbReference type="HOGENOM" id="CLU_008142_4_2_6"/>
<dbReference type="GO" id="GO:0005886">
    <property type="term" value="C:plasma membrane"/>
    <property type="evidence" value="ECO:0007669"/>
    <property type="project" value="UniProtKB-SubCell"/>
</dbReference>
<dbReference type="GO" id="GO:0015079">
    <property type="term" value="F:potassium ion transmembrane transporter activity"/>
    <property type="evidence" value="ECO:0007669"/>
    <property type="project" value="UniProtKB-UniRule"/>
</dbReference>
<dbReference type="GO" id="GO:0015293">
    <property type="term" value="F:symporter activity"/>
    <property type="evidence" value="ECO:0007669"/>
    <property type="project" value="UniProtKB-UniRule"/>
</dbReference>
<dbReference type="HAMAP" id="MF_01522">
    <property type="entry name" value="Kup"/>
    <property type="match status" value="1"/>
</dbReference>
<dbReference type="InterPro" id="IPR003855">
    <property type="entry name" value="K+_transporter"/>
</dbReference>
<dbReference type="InterPro" id="IPR053952">
    <property type="entry name" value="K_trans_C"/>
</dbReference>
<dbReference type="InterPro" id="IPR053951">
    <property type="entry name" value="K_trans_N"/>
</dbReference>
<dbReference type="InterPro" id="IPR023051">
    <property type="entry name" value="Kup"/>
</dbReference>
<dbReference type="NCBIfam" id="TIGR00794">
    <property type="entry name" value="kup"/>
    <property type="match status" value="1"/>
</dbReference>
<dbReference type="NCBIfam" id="NF008015">
    <property type="entry name" value="PRK10745.1"/>
    <property type="match status" value="1"/>
</dbReference>
<dbReference type="PANTHER" id="PTHR30540:SF79">
    <property type="entry name" value="LOW AFFINITY POTASSIUM TRANSPORT SYSTEM PROTEIN KUP"/>
    <property type="match status" value="1"/>
</dbReference>
<dbReference type="PANTHER" id="PTHR30540">
    <property type="entry name" value="OSMOTIC STRESS POTASSIUM TRANSPORTER"/>
    <property type="match status" value="1"/>
</dbReference>
<dbReference type="Pfam" id="PF02705">
    <property type="entry name" value="K_trans"/>
    <property type="match status" value="1"/>
</dbReference>
<dbReference type="Pfam" id="PF22776">
    <property type="entry name" value="K_trans_C"/>
    <property type="match status" value="1"/>
</dbReference>